<reference key="1">
    <citation type="submission" date="2007-12" db="EMBL/GenBank/DDBJ databases">
        <title>Complete sequence of chromosome of Francisella philomiragia subsp. philomiragia ATCC 25017.</title>
        <authorList>
            <consortium name="US DOE Joint Genome Institute"/>
            <person name="Copeland A."/>
            <person name="Lucas S."/>
            <person name="Lapidus A."/>
            <person name="Barry K."/>
            <person name="Detter J.C."/>
            <person name="Glavina del Rio T."/>
            <person name="Hammon N."/>
            <person name="Israni S."/>
            <person name="Dalin E."/>
            <person name="Tice H."/>
            <person name="Pitluck S."/>
            <person name="Chain P."/>
            <person name="Malfatti S."/>
            <person name="Shin M."/>
            <person name="Vergez L."/>
            <person name="Schmutz J."/>
            <person name="Larimer F."/>
            <person name="Land M."/>
            <person name="Hauser L."/>
            <person name="Richardson P."/>
        </authorList>
    </citation>
    <scope>NUCLEOTIDE SEQUENCE [LARGE SCALE GENOMIC DNA]</scope>
    <source>
        <strain>ATCC 25017 / CCUG 19701 / FSC 153 / O#319-036</strain>
    </source>
</reference>
<proteinExistence type="inferred from homology"/>
<sequence>MAKYFGTDGIRGEVGKSVIKAEFMQKLGNAVGTLINDNGYPGFVIIGQDTRSSGKFLKFALVSGLNAAGIDVIDLGVVPTPIVAFMTVKYKAAAGFVITASHNKFTDNGVKLFSSSGFKLDDALEEEVEAKIDSDFIYQTECKFGNYKVAENFIDEYIENLFERFGSLVNYKGKVVIDCANGAASNHFEALLDRFCIDYISVASNPDGLNINVDCGATCTSNIKKAVIEHNADLGISLDGDADRIIIVDENAQEIDGDGILNIIAQYSNICGGTTGIVGTQMTNMSYENHYKSNNIPFIRSKVGDRYVLEDLVKHGYKIGGESSGHVINLNFGTTGDGLSTAIQLLAIFSQSDKPVSAFKLPGELMQQTMINVPLNFKVTSDHLAKLAGDVAKAEERLGSRGRVLLRPSGTEPVLRVMVEADTKDLATKEAEYLVEKVKQKLV</sequence>
<organism>
    <name type="scientific">Francisella philomiragia subsp. philomiragia (strain ATCC 25017 / CCUG 19701 / FSC 153 / O#319-036)</name>
    <dbReference type="NCBI Taxonomy" id="484022"/>
    <lineage>
        <taxon>Bacteria</taxon>
        <taxon>Pseudomonadati</taxon>
        <taxon>Pseudomonadota</taxon>
        <taxon>Gammaproteobacteria</taxon>
        <taxon>Thiotrichales</taxon>
        <taxon>Francisellaceae</taxon>
        <taxon>Francisella</taxon>
    </lineage>
</organism>
<accession>B0TWU1</accession>
<protein>
    <recommendedName>
        <fullName evidence="1">Phosphoglucosamine mutase</fullName>
        <ecNumber evidence="1">5.4.2.10</ecNumber>
    </recommendedName>
</protein>
<dbReference type="EC" id="5.4.2.10" evidence="1"/>
<dbReference type="EMBL" id="CP000937">
    <property type="protein sequence ID" value="ABZ87199.1"/>
    <property type="status" value="ALT_INIT"/>
    <property type="molecule type" value="Genomic_DNA"/>
</dbReference>
<dbReference type="SMR" id="B0TWU1"/>
<dbReference type="KEGG" id="fph:Fphi_0976"/>
<dbReference type="eggNOG" id="COG1109">
    <property type="taxonomic scope" value="Bacteria"/>
</dbReference>
<dbReference type="HOGENOM" id="CLU_016950_7_1_6"/>
<dbReference type="GO" id="GO:0005829">
    <property type="term" value="C:cytosol"/>
    <property type="evidence" value="ECO:0007669"/>
    <property type="project" value="TreeGrafter"/>
</dbReference>
<dbReference type="GO" id="GO:0000287">
    <property type="term" value="F:magnesium ion binding"/>
    <property type="evidence" value="ECO:0007669"/>
    <property type="project" value="UniProtKB-UniRule"/>
</dbReference>
<dbReference type="GO" id="GO:0008966">
    <property type="term" value="F:phosphoglucosamine mutase activity"/>
    <property type="evidence" value="ECO:0007669"/>
    <property type="project" value="UniProtKB-UniRule"/>
</dbReference>
<dbReference type="GO" id="GO:0004615">
    <property type="term" value="F:phosphomannomutase activity"/>
    <property type="evidence" value="ECO:0007669"/>
    <property type="project" value="TreeGrafter"/>
</dbReference>
<dbReference type="GO" id="GO:0005975">
    <property type="term" value="P:carbohydrate metabolic process"/>
    <property type="evidence" value="ECO:0007669"/>
    <property type="project" value="InterPro"/>
</dbReference>
<dbReference type="GO" id="GO:0009252">
    <property type="term" value="P:peptidoglycan biosynthetic process"/>
    <property type="evidence" value="ECO:0007669"/>
    <property type="project" value="TreeGrafter"/>
</dbReference>
<dbReference type="GO" id="GO:0006048">
    <property type="term" value="P:UDP-N-acetylglucosamine biosynthetic process"/>
    <property type="evidence" value="ECO:0007669"/>
    <property type="project" value="TreeGrafter"/>
</dbReference>
<dbReference type="CDD" id="cd05802">
    <property type="entry name" value="GlmM"/>
    <property type="match status" value="1"/>
</dbReference>
<dbReference type="FunFam" id="3.30.310.50:FF:000001">
    <property type="entry name" value="Phosphoglucosamine mutase"/>
    <property type="match status" value="1"/>
</dbReference>
<dbReference type="FunFam" id="3.40.120.10:FF:000001">
    <property type="entry name" value="Phosphoglucosamine mutase"/>
    <property type="match status" value="1"/>
</dbReference>
<dbReference type="FunFam" id="3.40.120.10:FF:000003">
    <property type="entry name" value="Phosphoglucosamine mutase"/>
    <property type="match status" value="1"/>
</dbReference>
<dbReference type="Gene3D" id="3.40.120.10">
    <property type="entry name" value="Alpha-D-Glucose-1,6-Bisphosphate, subunit A, domain 3"/>
    <property type="match status" value="3"/>
</dbReference>
<dbReference type="Gene3D" id="3.30.310.50">
    <property type="entry name" value="Alpha-D-phosphohexomutase, C-terminal domain"/>
    <property type="match status" value="1"/>
</dbReference>
<dbReference type="HAMAP" id="MF_01554_B">
    <property type="entry name" value="GlmM_B"/>
    <property type="match status" value="1"/>
</dbReference>
<dbReference type="InterPro" id="IPR005844">
    <property type="entry name" value="A-D-PHexomutase_a/b/a-I"/>
</dbReference>
<dbReference type="InterPro" id="IPR016055">
    <property type="entry name" value="A-D-PHexomutase_a/b/a-I/II/III"/>
</dbReference>
<dbReference type="InterPro" id="IPR005845">
    <property type="entry name" value="A-D-PHexomutase_a/b/a-II"/>
</dbReference>
<dbReference type="InterPro" id="IPR005846">
    <property type="entry name" value="A-D-PHexomutase_a/b/a-III"/>
</dbReference>
<dbReference type="InterPro" id="IPR005843">
    <property type="entry name" value="A-D-PHexomutase_C"/>
</dbReference>
<dbReference type="InterPro" id="IPR036900">
    <property type="entry name" value="A-D-PHexomutase_C_sf"/>
</dbReference>
<dbReference type="InterPro" id="IPR005841">
    <property type="entry name" value="Alpha-D-phosphohexomutase_SF"/>
</dbReference>
<dbReference type="InterPro" id="IPR006352">
    <property type="entry name" value="GlmM_bact"/>
</dbReference>
<dbReference type="InterPro" id="IPR050060">
    <property type="entry name" value="Phosphoglucosamine_mutase"/>
</dbReference>
<dbReference type="NCBIfam" id="TIGR01455">
    <property type="entry name" value="glmM"/>
    <property type="match status" value="1"/>
</dbReference>
<dbReference type="PANTHER" id="PTHR42946:SF1">
    <property type="entry name" value="PHOSPHOGLUCOMUTASE (ALPHA-D-GLUCOSE-1,6-BISPHOSPHATE-DEPENDENT)"/>
    <property type="match status" value="1"/>
</dbReference>
<dbReference type="PANTHER" id="PTHR42946">
    <property type="entry name" value="PHOSPHOHEXOSE MUTASE"/>
    <property type="match status" value="1"/>
</dbReference>
<dbReference type="Pfam" id="PF02878">
    <property type="entry name" value="PGM_PMM_I"/>
    <property type="match status" value="1"/>
</dbReference>
<dbReference type="Pfam" id="PF02879">
    <property type="entry name" value="PGM_PMM_II"/>
    <property type="match status" value="1"/>
</dbReference>
<dbReference type="Pfam" id="PF02880">
    <property type="entry name" value="PGM_PMM_III"/>
    <property type="match status" value="1"/>
</dbReference>
<dbReference type="Pfam" id="PF00408">
    <property type="entry name" value="PGM_PMM_IV"/>
    <property type="match status" value="1"/>
</dbReference>
<dbReference type="PRINTS" id="PR00509">
    <property type="entry name" value="PGMPMM"/>
</dbReference>
<dbReference type="SUPFAM" id="SSF55957">
    <property type="entry name" value="Phosphoglucomutase, C-terminal domain"/>
    <property type="match status" value="1"/>
</dbReference>
<dbReference type="SUPFAM" id="SSF53738">
    <property type="entry name" value="Phosphoglucomutase, first 3 domains"/>
    <property type="match status" value="3"/>
</dbReference>
<evidence type="ECO:0000255" key="1">
    <source>
        <dbReference type="HAMAP-Rule" id="MF_01554"/>
    </source>
</evidence>
<evidence type="ECO:0000305" key="2"/>
<keyword id="KW-0413">Isomerase</keyword>
<keyword id="KW-0460">Magnesium</keyword>
<keyword id="KW-0479">Metal-binding</keyword>
<keyword id="KW-0597">Phosphoprotein</keyword>
<comment type="function">
    <text evidence="1">Catalyzes the conversion of glucosamine-6-phosphate to glucosamine-1-phosphate.</text>
</comment>
<comment type="catalytic activity">
    <reaction evidence="1">
        <text>alpha-D-glucosamine 1-phosphate = D-glucosamine 6-phosphate</text>
        <dbReference type="Rhea" id="RHEA:23424"/>
        <dbReference type="ChEBI" id="CHEBI:58516"/>
        <dbReference type="ChEBI" id="CHEBI:58725"/>
        <dbReference type="EC" id="5.4.2.10"/>
    </reaction>
</comment>
<comment type="cofactor">
    <cofactor evidence="1">
        <name>Mg(2+)</name>
        <dbReference type="ChEBI" id="CHEBI:18420"/>
    </cofactor>
    <text evidence="1">Binds 1 Mg(2+) ion per subunit.</text>
</comment>
<comment type="PTM">
    <text evidence="1">Activated by phosphorylation.</text>
</comment>
<comment type="similarity">
    <text evidence="1">Belongs to the phosphohexose mutase family.</text>
</comment>
<comment type="sequence caution" evidence="2">
    <conflict type="erroneous initiation">
        <sequence resource="EMBL-CDS" id="ABZ87199"/>
    </conflict>
</comment>
<name>GLMM_FRAP2</name>
<gene>
    <name evidence="1" type="primary">glmM</name>
    <name type="ordered locus">Fphi_0976</name>
</gene>
<feature type="chain" id="PRO_0000343589" description="Phosphoglucosamine mutase">
    <location>
        <begin position="1"/>
        <end position="443"/>
    </location>
</feature>
<feature type="active site" description="Phosphoserine intermediate" evidence="1">
    <location>
        <position position="101"/>
    </location>
</feature>
<feature type="binding site" description="via phosphate group" evidence="1">
    <location>
        <position position="101"/>
    </location>
    <ligand>
        <name>Mg(2+)</name>
        <dbReference type="ChEBI" id="CHEBI:18420"/>
    </ligand>
</feature>
<feature type="binding site" evidence="1">
    <location>
        <position position="239"/>
    </location>
    <ligand>
        <name>Mg(2+)</name>
        <dbReference type="ChEBI" id="CHEBI:18420"/>
    </ligand>
</feature>
<feature type="binding site" evidence="1">
    <location>
        <position position="241"/>
    </location>
    <ligand>
        <name>Mg(2+)</name>
        <dbReference type="ChEBI" id="CHEBI:18420"/>
    </ligand>
</feature>
<feature type="binding site" evidence="1">
    <location>
        <position position="243"/>
    </location>
    <ligand>
        <name>Mg(2+)</name>
        <dbReference type="ChEBI" id="CHEBI:18420"/>
    </ligand>
</feature>
<feature type="modified residue" description="Phosphoserine" evidence="1">
    <location>
        <position position="101"/>
    </location>
</feature>